<gene>
    <name evidence="1" type="primary">murB</name>
    <name type="ordered locus">BLi01740</name>
    <name type="ordered locus">BL02244</name>
</gene>
<sequence>MDKVIQELKELEVGKVLENEPLSNHTTIKIGGPADVLVIPKDIQAVKDTMKVVKKHGVKWTAIGRGSNLLVLDEGIRGVVIKLGQGLDHMEIDGEQVTVGGGYSVVRLATGISKKGLSGLEFAAGIPGSVGGAVYMNAGAHGSDISKVLVKALILFEDGTIEWLTNEEMAFSYRTSILQNKRPGICLEAVLQLEQKERDQIVAQMQKNKDYRKETQPVSNPCAGSIFRNPLPEHAGRLVEEAGLKGHQIGGAKVSEMHGNFIVNAGGATAKDVLDLIAFIQKTIKEKYDIDMHTEVEIIGEKR</sequence>
<organism>
    <name type="scientific">Bacillus licheniformis (strain ATCC 14580 / DSM 13 / JCM 2505 / CCUG 7422 / NBRC 12200 / NCIMB 9375 / NCTC 10341 / NRRL NRS-1264 / Gibson 46)</name>
    <dbReference type="NCBI Taxonomy" id="279010"/>
    <lineage>
        <taxon>Bacteria</taxon>
        <taxon>Bacillati</taxon>
        <taxon>Bacillota</taxon>
        <taxon>Bacilli</taxon>
        <taxon>Bacillales</taxon>
        <taxon>Bacillaceae</taxon>
        <taxon>Bacillus</taxon>
    </lineage>
</organism>
<evidence type="ECO:0000255" key="1">
    <source>
        <dbReference type="HAMAP-Rule" id="MF_00037"/>
    </source>
</evidence>
<evidence type="ECO:0007829" key="2">
    <source>
        <dbReference type="PDB" id="4PYT"/>
    </source>
</evidence>
<protein>
    <recommendedName>
        <fullName evidence="1">UDP-N-acetylenolpyruvoylglucosamine reductase</fullName>
        <ecNumber evidence="1">1.3.1.98</ecNumber>
    </recommendedName>
    <alternativeName>
        <fullName evidence="1">UDP-N-acetylmuramate dehydrogenase</fullName>
    </alternativeName>
</protein>
<comment type="function">
    <text evidence="1">Cell wall formation.</text>
</comment>
<comment type="catalytic activity">
    <reaction evidence="1">
        <text>UDP-N-acetyl-alpha-D-muramate + NADP(+) = UDP-N-acetyl-3-O-(1-carboxyvinyl)-alpha-D-glucosamine + NADPH + H(+)</text>
        <dbReference type="Rhea" id="RHEA:12248"/>
        <dbReference type="ChEBI" id="CHEBI:15378"/>
        <dbReference type="ChEBI" id="CHEBI:57783"/>
        <dbReference type="ChEBI" id="CHEBI:58349"/>
        <dbReference type="ChEBI" id="CHEBI:68483"/>
        <dbReference type="ChEBI" id="CHEBI:70757"/>
        <dbReference type="EC" id="1.3.1.98"/>
    </reaction>
</comment>
<comment type="cofactor">
    <cofactor evidence="1">
        <name>FAD</name>
        <dbReference type="ChEBI" id="CHEBI:57692"/>
    </cofactor>
</comment>
<comment type="pathway">
    <text evidence="1">Cell wall biogenesis; peptidoglycan biosynthesis.</text>
</comment>
<comment type="subcellular location">
    <subcellularLocation>
        <location evidence="1">Cytoplasm</location>
    </subcellularLocation>
</comment>
<comment type="similarity">
    <text evidence="1">Belongs to the MurB family.</text>
</comment>
<accession>Q65JX9</accession>
<accession>Q62VD0</accession>
<reference key="1">
    <citation type="journal article" date="2004" name="J. Mol. Microbiol. Biotechnol.">
        <title>The complete genome sequence of Bacillus licheniformis DSM13, an organism with great industrial potential.</title>
        <authorList>
            <person name="Veith B."/>
            <person name="Herzberg C."/>
            <person name="Steckel S."/>
            <person name="Feesche J."/>
            <person name="Maurer K.H."/>
            <person name="Ehrenreich P."/>
            <person name="Baeumer S."/>
            <person name="Henne A."/>
            <person name="Liesegang H."/>
            <person name="Merkl R."/>
            <person name="Ehrenreich A."/>
            <person name="Gottschalk G."/>
        </authorList>
    </citation>
    <scope>NUCLEOTIDE SEQUENCE [LARGE SCALE GENOMIC DNA]</scope>
    <source>
        <strain>ATCC 14580 / DSM 13 / JCM 2505 / CCUG 7422 / NBRC 12200 / NCIMB 9375 / NCTC 10341 / NRRL NRS-1264 / Gibson 46</strain>
    </source>
</reference>
<reference key="2">
    <citation type="journal article" date="2004" name="Genome Biol.">
        <title>Complete genome sequence of the industrial bacterium Bacillus licheniformis and comparisons with closely related Bacillus species.</title>
        <authorList>
            <person name="Rey M.W."/>
            <person name="Ramaiya P."/>
            <person name="Nelson B.A."/>
            <person name="Brody-Karpin S.D."/>
            <person name="Zaretsky E.J."/>
            <person name="Tang M."/>
            <person name="Lopez de Leon A."/>
            <person name="Xiang H."/>
            <person name="Gusti V."/>
            <person name="Clausen I.G."/>
            <person name="Olsen P.B."/>
            <person name="Rasmussen M.D."/>
            <person name="Andersen J.T."/>
            <person name="Joergensen P.L."/>
            <person name="Larsen T.S."/>
            <person name="Sorokin A."/>
            <person name="Bolotin A."/>
            <person name="Lapidus A."/>
            <person name="Galleron N."/>
            <person name="Ehrlich S.D."/>
            <person name="Berka R.M."/>
        </authorList>
    </citation>
    <scope>NUCLEOTIDE SEQUENCE [LARGE SCALE GENOMIC DNA]</scope>
    <source>
        <strain>ATCC 14580 / DSM 13 / JCM 2505 / CCUG 7422 / NBRC 12200 / NCIMB 9375 / NCTC 10341 / NRRL NRS-1264 / Gibson 46</strain>
    </source>
</reference>
<proteinExistence type="evidence at protein level"/>
<feature type="chain" id="PRO_0000224659" description="UDP-N-acetylenolpyruvoylglucosamine reductase">
    <location>
        <begin position="1"/>
        <end position="303"/>
    </location>
</feature>
<feature type="domain" description="FAD-binding PCMH-type" evidence="1">
    <location>
        <begin position="29"/>
        <end position="196"/>
    </location>
</feature>
<feature type="active site" evidence="1">
    <location>
        <position position="174"/>
    </location>
</feature>
<feature type="active site" description="Proton donor" evidence="1">
    <location>
        <position position="225"/>
    </location>
</feature>
<feature type="active site" evidence="1">
    <location>
        <position position="295"/>
    </location>
</feature>
<feature type="helix" evidence="2">
    <location>
        <begin position="2"/>
        <end position="10"/>
    </location>
</feature>
<feature type="strand" evidence="2">
    <location>
        <begin position="14"/>
        <end position="21"/>
    </location>
</feature>
<feature type="helix" evidence="2">
    <location>
        <begin position="22"/>
        <end position="25"/>
    </location>
</feature>
<feature type="strand" evidence="2">
    <location>
        <begin position="33"/>
        <end position="42"/>
    </location>
</feature>
<feature type="helix" evidence="2">
    <location>
        <begin position="43"/>
        <end position="56"/>
    </location>
</feature>
<feature type="strand" evidence="2">
    <location>
        <begin position="60"/>
        <end position="65"/>
    </location>
</feature>
<feature type="strand" evidence="2">
    <location>
        <begin position="69"/>
        <end position="71"/>
    </location>
</feature>
<feature type="strand" evidence="2">
    <location>
        <begin position="76"/>
        <end position="82"/>
    </location>
</feature>
<feature type="helix" evidence="2">
    <location>
        <begin position="85"/>
        <end position="87"/>
    </location>
</feature>
<feature type="strand" evidence="2">
    <location>
        <begin position="90"/>
        <end position="93"/>
    </location>
</feature>
<feature type="strand" evidence="2">
    <location>
        <begin position="96"/>
        <end position="100"/>
    </location>
</feature>
<feature type="helix" evidence="2">
    <location>
        <begin position="105"/>
        <end position="114"/>
    </location>
</feature>
<feature type="strand" evidence="2">
    <location>
        <begin position="117"/>
        <end position="119"/>
    </location>
</feature>
<feature type="helix" evidence="2">
    <location>
        <begin position="121"/>
        <end position="123"/>
    </location>
</feature>
<feature type="helix" evidence="2">
    <location>
        <begin position="130"/>
        <end position="136"/>
    </location>
</feature>
<feature type="helix" evidence="2">
    <location>
        <begin position="145"/>
        <end position="147"/>
    </location>
</feature>
<feature type="strand" evidence="2">
    <location>
        <begin position="149"/>
        <end position="155"/>
    </location>
</feature>
<feature type="strand" evidence="2">
    <location>
        <begin position="161"/>
        <end position="165"/>
    </location>
</feature>
<feature type="turn" evidence="2">
    <location>
        <begin position="166"/>
        <end position="170"/>
    </location>
</feature>
<feature type="helix" evidence="2">
    <location>
        <begin position="177"/>
        <end position="179"/>
    </location>
</feature>
<feature type="strand" evidence="2">
    <location>
        <begin position="185"/>
        <end position="192"/>
    </location>
</feature>
<feature type="helix" evidence="2">
    <location>
        <begin position="198"/>
        <end position="215"/>
    </location>
</feature>
<feature type="strand" evidence="2">
    <location>
        <begin position="218"/>
        <end position="220"/>
    </location>
</feature>
<feature type="helix" evidence="2">
    <location>
        <begin position="235"/>
        <end position="241"/>
    </location>
</feature>
<feature type="strand" evidence="2">
    <location>
        <begin position="252"/>
        <end position="254"/>
    </location>
</feature>
<feature type="strand" evidence="2">
    <location>
        <begin position="262"/>
        <end position="264"/>
    </location>
</feature>
<feature type="helix" evidence="2">
    <location>
        <begin position="270"/>
        <end position="288"/>
    </location>
</feature>
<feature type="strand" evidence="2">
    <location>
        <begin position="296"/>
        <end position="300"/>
    </location>
</feature>
<keyword id="KW-0002">3D-structure</keyword>
<keyword id="KW-0131">Cell cycle</keyword>
<keyword id="KW-0132">Cell division</keyword>
<keyword id="KW-0133">Cell shape</keyword>
<keyword id="KW-0961">Cell wall biogenesis/degradation</keyword>
<keyword id="KW-0963">Cytoplasm</keyword>
<keyword id="KW-0274">FAD</keyword>
<keyword id="KW-0285">Flavoprotein</keyword>
<keyword id="KW-0521">NADP</keyword>
<keyword id="KW-0560">Oxidoreductase</keyword>
<keyword id="KW-0573">Peptidoglycan synthesis</keyword>
<keyword id="KW-1185">Reference proteome</keyword>
<dbReference type="EC" id="1.3.1.98" evidence="1"/>
<dbReference type="EMBL" id="AE017333">
    <property type="protein sequence ID" value="AAU40635.1"/>
    <property type="molecule type" value="Genomic_DNA"/>
</dbReference>
<dbReference type="EMBL" id="CP000002">
    <property type="protein sequence ID" value="AAU23278.1"/>
    <property type="molecule type" value="Genomic_DNA"/>
</dbReference>
<dbReference type="RefSeq" id="WP_003181550.1">
    <property type="nucleotide sequence ID" value="NC_006322.1"/>
</dbReference>
<dbReference type="PDB" id="4PYT">
    <property type="method" value="X-ray"/>
    <property type="resolution" value="1.85 A"/>
    <property type="chains" value="A=1-303"/>
</dbReference>
<dbReference type="PDBsum" id="4PYT"/>
<dbReference type="SMR" id="Q65JX9"/>
<dbReference type="STRING" id="279010.BL02244"/>
<dbReference type="GeneID" id="92861666"/>
<dbReference type="KEGG" id="bld:BLi01740"/>
<dbReference type="KEGG" id="bli:BL02244"/>
<dbReference type="eggNOG" id="COG0812">
    <property type="taxonomic scope" value="Bacteria"/>
</dbReference>
<dbReference type="HOGENOM" id="CLU_035304_1_1_9"/>
<dbReference type="UniPathway" id="UPA00219"/>
<dbReference type="EvolutionaryTrace" id="Q65JX9"/>
<dbReference type="Proteomes" id="UP000000606">
    <property type="component" value="Chromosome"/>
</dbReference>
<dbReference type="GO" id="GO:0005829">
    <property type="term" value="C:cytosol"/>
    <property type="evidence" value="ECO:0007669"/>
    <property type="project" value="TreeGrafter"/>
</dbReference>
<dbReference type="GO" id="GO:0071949">
    <property type="term" value="F:FAD binding"/>
    <property type="evidence" value="ECO:0007669"/>
    <property type="project" value="InterPro"/>
</dbReference>
<dbReference type="GO" id="GO:0008762">
    <property type="term" value="F:UDP-N-acetylmuramate dehydrogenase activity"/>
    <property type="evidence" value="ECO:0007669"/>
    <property type="project" value="UniProtKB-UniRule"/>
</dbReference>
<dbReference type="GO" id="GO:0051301">
    <property type="term" value="P:cell division"/>
    <property type="evidence" value="ECO:0007669"/>
    <property type="project" value="UniProtKB-KW"/>
</dbReference>
<dbReference type="GO" id="GO:0071555">
    <property type="term" value="P:cell wall organization"/>
    <property type="evidence" value="ECO:0007669"/>
    <property type="project" value="UniProtKB-KW"/>
</dbReference>
<dbReference type="GO" id="GO:0009252">
    <property type="term" value="P:peptidoglycan biosynthetic process"/>
    <property type="evidence" value="ECO:0007669"/>
    <property type="project" value="UniProtKB-UniRule"/>
</dbReference>
<dbReference type="GO" id="GO:0008360">
    <property type="term" value="P:regulation of cell shape"/>
    <property type="evidence" value="ECO:0007669"/>
    <property type="project" value="UniProtKB-KW"/>
</dbReference>
<dbReference type="Gene3D" id="3.30.465.10">
    <property type="match status" value="1"/>
</dbReference>
<dbReference type="Gene3D" id="3.90.78.10">
    <property type="entry name" value="UDP-N-acetylenolpyruvoylglucosamine reductase, C-terminal domain"/>
    <property type="match status" value="1"/>
</dbReference>
<dbReference type="Gene3D" id="3.30.43.10">
    <property type="entry name" value="Uridine Diphospho-n-acetylenolpyruvylglucosamine Reductase, domain 2"/>
    <property type="match status" value="1"/>
</dbReference>
<dbReference type="HAMAP" id="MF_00037">
    <property type="entry name" value="MurB"/>
    <property type="match status" value="1"/>
</dbReference>
<dbReference type="InterPro" id="IPR016166">
    <property type="entry name" value="FAD-bd_PCMH"/>
</dbReference>
<dbReference type="InterPro" id="IPR036318">
    <property type="entry name" value="FAD-bd_PCMH-like_sf"/>
</dbReference>
<dbReference type="InterPro" id="IPR016167">
    <property type="entry name" value="FAD-bd_PCMH_sub1"/>
</dbReference>
<dbReference type="InterPro" id="IPR016169">
    <property type="entry name" value="FAD-bd_PCMH_sub2"/>
</dbReference>
<dbReference type="InterPro" id="IPR003170">
    <property type="entry name" value="MurB"/>
</dbReference>
<dbReference type="InterPro" id="IPR011601">
    <property type="entry name" value="MurB_C"/>
</dbReference>
<dbReference type="InterPro" id="IPR036635">
    <property type="entry name" value="MurB_C_sf"/>
</dbReference>
<dbReference type="InterPro" id="IPR006094">
    <property type="entry name" value="Oxid_FAD_bind_N"/>
</dbReference>
<dbReference type="NCBIfam" id="TIGR00179">
    <property type="entry name" value="murB"/>
    <property type="match status" value="1"/>
</dbReference>
<dbReference type="NCBIfam" id="NF010480">
    <property type="entry name" value="PRK13905.1"/>
    <property type="match status" value="1"/>
</dbReference>
<dbReference type="PANTHER" id="PTHR21071">
    <property type="entry name" value="UDP-N-ACETYLENOLPYRUVOYLGLUCOSAMINE REDUCTASE"/>
    <property type="match status" value="1"/>
</dbReference>
<dbReference type="PANTHER" id="PTHR21071:SF5">
    <property type="entry name" value="UDP-N-ACETYLENOLPYRUVOYLGLUCOSAMINE REDUCTASE"/>
    <property type="match status" value="1"/>
</dbReference>
<dbReference type="Pfam" id="PF01565">
    <property type="entry name" value="FAD_binding_4"/>
    <property type="match status" value="1"/>
</dbReference>
<dbReference type="Pfam" id="PF02873">
    <property type="entry name" value="MurB_C"/>
    <property type="match status" value="1"/>
</dbReference>
<dbReference type="SUPFAM" id="SSF56176">
    <property type="entry name" value="FAD-binding/transporter-associated domain-like"/>
    <property type="match status" value="1"/>
</dbReference>
<dbReference type="SUPFAM" id="SSF56194">
    <property type="entry name" value="Uridine diphospho-N-Acetylenolpyruvylglucosamine reductase, MurB, C-terminal domain"/>
    <property type="match status" value="1"/>
</dbReference>
<dbReference type="PROSITE" id="PS51387">
    <property type="entry name" value="FAD_PCMH"/>
    <property type="match status" value="1"/>
</dbReference>
<name>MURB_BACLD</name>